<keyword id="KW-0009">Actin-binding</keyword>
<keyword id="KW-0020">Allergen</keyword>
<keyword id="KW-0963">Cytoplasm</keyword>
<keyword id="KW-0206">Cytoskeleton</keyword>
<keyword id="KW-0903">Direct protein sequencing</keyword>
<keyword id="KW-1015">Disulfide bond</keyword>
<keyword id="KW-0597">Phosphoprotein</keyword>
<keyword id="KW-1185">Reference proteome</keyword>
<sequence length="131" mass="14269">MSWQAYVDEHLMCEIDGHHLTAAAILGHDGSVWAQSSSFPQFKSEEITNIMNDFNEPGSLAPTGLYLGSTKYMVIQGEPGAVIRGKKGSGGVTVKKTNQALIFGIYEEPMTPGQCNMVVERLGDYLIEQGM</sequence>
<reference evidence="11" key="1">
    <citation type="journal article" date="2005" name="Clin. Exp. Allergy">
        <title>Pho d 2, a major allergen from date palm pollen, is a profilin: cloning, sequencing, and immunoglobulin E cross-reactivity with other profilins.</title>
        <authorList>
            <person name="Asturias J.A."/>
            <person name="Ibarrola I."/>
            <person name="Fernandez J."/>
            <person name="Arilla M.C."/>
            <person name="Gonzalez-Rioja R."/>
            <person name="Martinez A."/>
        </authorList>
    </citation>
    <scope>NUCLEOTIDE SEQUENCE [MRNA]</scope>
    <scope>ALLERGEN</scope>
    <source>
        <tissue evidence="11">Pollen</tissue>
    </source>
</reference>
<reference evidence="10" key="2">
    <citation type="journal article" date="2017" name="Mol. Immunol.">
        <title>Purification and immunochemical characterization of Pla l 2, the profilin from Plantago lanceolata.</title>
        <authorList>
            <person name="Moya R."/>
            <person name="Rubio V."/>
            <person name="Beitia J.M."/>
            <person name="Carnes J."/>
            <person name="Lopez-Matas M.A."/>
        </authorList>
    </citation>
    <scope>PROTEIN SEQUENCE OF 44-84 AND 97-121</scope>
    <scope>ALLERGEN</scope>
    <scope>IDENTIFICATION BY MASS SPECTROMETRY</scope>
    <source>
        <tissue evidence="9">Pollen</tissue>
    </source>
</reference>
<comment type="function">
    <text evidence="4">Binds to actin and affects the structure of the cytoskeleton. At high concentrations, profilin prevents the polymerization of actin, whereas it enhances it at low concentrations.</text>
</comment>
<comment type="subunit">
    <text evidence="4">Occurs in many kinds of cells as a complex with monomeric actin in a 1:1 ratio.</text>
</comment>
<comment type="subcellular location">
    <subcellularLocation>
        <location evidence="1">Cytoplasm</location>
        <location evidence="1">Cytoskeleton</location>
    </subcellularLocation>
</comment>
<comment type="allergen">
    <text evidence="6 7">Causes an allergic reaction in human. Binds to IgE.</text>
</comment>
<comment type="similarity">
    <text evidence="3 5">Belongs to the profilin family.</text>
</comment>
<feature type="chain" id="PRO_0000439275" description="Profilin" evidence="10">
    <location>
        <begin position="1"/>
        <end position="131"/>
    </location>
</feature>
<feature type="short sequence motif" description="Involved in PIP2 interaction" evidence="1">
    <location>
        <begin position="81"/>
        <end position="97"/>
    </location>
</feature>
<feature type="modified residue" description="Phosphothreonine" evidence="2">
    <location>
        <position position="111"/>
    </location>
</feature>
<feature type="disulfide bond" evidence="1">
    <location>
        <begin position="13"/>
        <end position="115"/>
    </location>
</feature>
<organism evidence="11">
    <name type="scientific">Phoenix dactylifera</name>
    <name type="common">Date palm</name>
    <dbReference type="NCBI Taxonomy" id="42345"/>
    <lineage>
        <taxon>Eukaryota</taxon>
        <taxon>Viridiplantae</taxon>
        <taxon>Streptophyta</taxon>
        <taxon>Embryophyta</taxon>
        <taxon>Tracheophyta</taxon>
        <taxon>Spermatophyta</taxon>
        <taxon>Magnoliopsida</taxon>
        <taxon>Liliopsida</taxon>
        <taxon>Arecaceae</taxon>
        <taxon>Coryphoideae</taxon>
        <taxon>Phoeniceae</taxon>
        <taxon>Phoenix</taxon>
    </lineage>
</organism>
<evidence type="ECO:0000250" key="1">
    <source>
        <dbReference type="UniProtKB" id="P35081"/>
    </source>
</evidence>
<evidence type="ECO:0000250" key="2">
    <source>
        <dbReference type="UniProtKB" id="Q9ST99"/>
    </source>
</evidence>
<evidence type="ECO:0000255" key="3"/>
<evidence type="ECO:0000255" key="4">
    <source>
        <dbReference type="RuleBase" id="RU003908"/>
    </source>
</evidence>
<evidence type="ECO:0000255" key="5">
    <source>
        <dbReference type="RuleBase" id="RU003909"/>
    </source>
</evidence>
<evidence type="ECO:0000269" key="6">
    <source>
    </source>
</evidence>
<evidence type="ECO:0000269" key="7">
    <source>
    </source>
</evidence>
<evidence type="ECO:0000303" key="8">
    <source>
    </source>
</evidence>
<evidence type="ECO:0000303" key="9">
    <source>
    </source>
</evidence>
<evidence type="ECO:0000305" key="10"/>
<evidence type="ECO:0000312" key="11">
    <source>
        <dbReference type="EMBL" id="CAD10390.1"/>
    </source>
</evidence>
<accession>Q8L5D8</accession>
<name>PROF_PHODC</name>
<dbReference type="EMBL" id="AJ417566">
    <property type="protein sequence ID" value="CAD10390.1"/>
    <property type="molecule type" value="mRNA"/>
</dbReference>
<dbReference type="RefSeq" id="NP_001288607.1">
    <property type="nucleotide sequence ID" value="NM_001301678.1"/>
</dbReference>
<dbReference type="SMR" id="Q8L5D8"/>
<dbReference type="STRING" id="42345.Q8L5D8"/>
<dbReference type="Allergome" id="3423">
    <property type="allergen name" value="Pho d 2.0101"/>
</dbReference>
<dbReference type="Allergome" id="571">
    <property type="allergen name" value="Pho d 2"/>
</dbReference>
<dbReference type="GeneID" id="103711216"/>
<dbReference type="KEGG" id="pda:103711216"/>
<dbReference type="OrthoDB" id="421374at2759"/>
<dbReference type="Proteomes" id="UP000228380">
    <property type="component" value="Chromosome 11"/>
</dbReference>
<dbReference type="GO" id="GO:0005938">
    <property type="term" value="C:cell cortex"/>
    <property type="evidence" value="ECO:0007669"/>
    <property type="project" value="TreeGrafter"/>
</dbReference>
<dbReference type="GO" id="GO:0005856">
    <property type="term" value="C:cytoskeleton"/>
    <property type="evidence" value="ECO:0007669"/>
    <property type="project" value="UniProtKB-SubCell"/>
</dbReference>
<dbReference type="GO" id="GO:0003785">
    <property type="term" value="F:actin monomer binding"/>
    <property type="evidence" value="ECO:0007669"/>
    <property type="project" value="TreeGrafter"/>
</dbReference>
<dbReference type="CDD" id="cd00148">
    <property type="entry name" value="PROF"/>
    <property type="match status" value="1"/>
</dbReference>
<dbReference type="FunFam" id="3.30.450.30:FF:000001">
    <property type="entry name" value="Profilin"/>
    <property type="match status" value="1"/>
</dbReference>
<dbReference type="Gene3D" id="3.30.450.30">
    <property type="entry name" value="Dynein light chain 2a, cytoplasmic"/>
    <property type="match status" value="1"/>
</dbReference>
<dbReference type="InterPro" id="IPR048278">
    <property type="entry name" value="PFN"/>
</dbReference>
<dbReference type="InterPro" id="IPR005455">
    <property type="entry name" value="PFN_euk"/>
</dbReference>
<dbReference type="InterPro" id="IPR036140">
    <property type="entry name" value="PFN_sf"/>
</dbReference>
<dbReference type="InterPro" id="IPR027310">
    <property type="entry name" value="Profilin_CS"/>
</dbReference>
<dbReference type="PANTHER" id="PTHR11604">
    <property type="entry name" value="PROFILIN"/>
    <property type="match status" value="1"/>
</dbReference>
<dbReference type="PANTHER" id="PTHR11604:SF49">
    <property type="entry name" value="PROFILIN-2"/>
    <property type="match status" value="1"/>
</dbReference>
<dbReference type="Pfam" id="PF00235">
    <property type="entry name" value="Profilin"/>
    <property type="match status" value="1"/>
</dbReference>
<dbReference type="PRINTS" id="PR00392">
    <property type="entry name" value="PROFILIN"/>
</dbReference>
<dbReference type="PRINTS" id="PR01640">
    <property type="entry name" value="PROFILINPLNT"/>
</dbReference>
<dbReference type="SMART" id="SM00392">
    <property type="entry name" value="PROF"/>
    <property type="match status" value="1"/>
</dbReference>
<dbReference type="SUPFAM" id="SSF55770">
    <property type="entry name" value="Profilin (actin-binding protein)"/>
    <property type="match status" value="1"/>
</dbReference>
<dbReference type="PROSITE" id="PS00414">
    <property type="entry name" value="PROFILIN"/>
    <property type="match status" value="1"/>
</dbReference>
<protein>
    <recommendedName>
        <fullName evidence="5 8">Profilin</fullName>
    </recommendedName>
    <allergenName evidence="8">Pho d 2</allergenName>
</protein>
<proteinExistence type="evidence at protein level"/>